<keyword id="KW-1185">Reference proteome</keyword>
<keyword id="KW-0687">Ribonucleoprotein</keyword>
<keyword id="KW-0689">Ribosomal protein</keyword>
<keyword id="KW-0694">RNA-binding</keyword>
<keyword id="KW-0699">rRNA-binding</keyword>
<organism>
    <name type="scientific">Bradyrhizobium sp. (strain BTAi1 / ATCC BAA-1182)</name>
    <dbReference type="NCBI Taxonomy" id="288000"/>
    <lineage>
        <taxon>Bacteria</taxon>
        <taxon>Pseudomonadati</taxon>
        <taxon>Pseudomonadota</taxon>
        <taxon>Alphaproteobacteria</taxon>
        <taxon>Hyphomicrobiales</taxon>
        <taxon>Nitrobacteraceae</taxon>
        <taxon>Bradyrhizobium</taxon>
    </lineage>
</organism>
<gene>
    <name evidence="1" type="primary">rplI</name>
    <name type="ordered locus">BBta_3812</name>
</gene>
<feature type="chain" id="PRO_1000014745" description="Large ribosomal subunit protein bL9">
    <location>
        <begin position="1"/>
        <end position="197"/>
    </location>
</feature>
<feature type="region of interest" description="Disordered" evidence="2">
    <location>
        <begin position="178"/>
        <end position="197"/>
    </location>
</feature>
<feature type="compositionally biased region" description="Acidic residues" evidence="2">
    <location>
        <begin position="181"/>
        <end position="191"/>
    </location>
</feature>
<sequence length="197" mass="21240">MEVILLERVAKLGQMGEIVKVKDGFARNFLLKRKKALRATAENKAKYEGMKAELEANNIKAKGEAAKVAEKIDGRDIVIIRQASESGQLFGSVSVRDIVVALAADGITVSRPQVWLDAPIKAIGQQKITIAIHPEVETSVTVTVARSADEAERIKRGEDISTRQEDRDAAAEAIAAAGEFFDPEAQEDEAAAGETAQ</sequence>
<comment type="function">
    <text evidence="1">Binds to the 23S rRNA.</text>
</comment>
<comment type="similarity">
    <text evidence="1">Belongs to the bacterial ribosomal protein bL9 family.</text>
</comment>
<reference key="1">
    <citation type="journal article" date="2007" name="Science">
        <title>Legumes symbioses: absence of nod genes in photosynthetic bradyrhizobia.</title>
        <authorList>
            <person name="Giraud E."/>
            <person name="Moulin L."/>
            <person name="Vallenet D."/>
            <person name="Barbe V."/>
            <person name="Cytryn E."/>
            <person name="Avarre J.-C."/>
            <person name="Jaubert M."/>
            <person name="Simon D."/>
            <person name="Cartieaux F."/>
            <person name="Prin Y."/>
            <person name="Bena G."/>
            <person name="Hannibal L."/>
            <person name="Fardoux J."/>
            <person name="Kojadinovic M."/>
            <person name="Vuillet L."/>
            <person name="Lajus A."/>
            <person name="Cruveiller S."/>
            <person name="Rouy Z."/>
            <person name="Mangenot S."/>
            <person name="Segurens B."/>
            <person name="Dossat C."/>
            <person name="Franck W.L."/>
            <person name="Chang W.-S."/>
            <person name="Saunders E."/>
            <person name="Bruce D."/>
            <person name="Richardson P."/>
            <person name="Normand P."/>
            <person name="Dreyfus B."/>
            <person name="Pignol D."/>
            <person name="Stacey G."/>
            <person name="Emerich D."/>
            <person name="Vermeglio A."/>
            <person name="Medigue C."/>
            <person name="Sadowsky M."/>
        </authorList>
    </citation>
    <scope>NUCLEOTIDE SEQUENCE [LARGE SCALE GENOMIC DNA]</scope>
    <source>
        <strain>BTAi1 / ATCC BAA-1182</strain>
    </source>
</reference>
<accession>A5EI95</accession>
<proteinExistence type="inferred from homology"/>
<protein>
    <recommendedName>
        <fullName evidence="1">Large ribosomal subunit protein bL9</fullName>
    </recommendedName>
    <alternativeName>
        <fullName evidence="3">50S ribosomal protein L9</fullName>
    </alternativeName>
</protein>
<dbReference type="EMBL" id="CP000494">
    <property type="protein sequence ID" value="ABQ35889.1"/>
    <property type="molecule type" value="Genomic_DNA"/>
</dbReference>
<dbReference type="RefSeq" id="WP_012043896.1">
    <property type="nucleotide sequence ID" value="NC_009485.1"/>
</dbReference>
<dbReference type="SMR" id="A5EI95"/>
<dbReference type="STRING" id="288000.BBta_3812"/>
<dbReference type="KEGG" id="bbt:BBta_3812"/>
<dbReference type="eggNOG" id="COG0359">
    <property type="taxonomic scope" value="Bacteria"/>
</dbReference>
<dbReference type="HOGENOM" id="CLU_078938_1_0_5"/>
<dbReference type="OrthoDB" id="9788336at2"/>
<dbReference type="Proteomes" id="UP000000246">
    <property type="component" value="Chromosome"/>
</dbReference>
<dbReference type="GO" id="GO:1990904">
    <property type="term" value="C:ribonucleoprotein complex"/>
    <property type="evidence" value="ECO:0007669"/>
    <property type="project" value="UniProtKB-KW"/>
</dbReference>
<dbReference type="GO" id="GO:0005840">
    <property type="term" value="C:ribosome"/>
    <property type="evidence" value="ECO:0007669"/>
    <property type="project" value="UniProtKB-KW"/>
</dbReference>
<dbReference type="GO" id="GO:0019843">
    <property type="term" value="F:rRNA binding"/>
    <property type="evidence" value="ECO:0007669"/>
    <property type="project" value="UniProtKB-UniRule"/>
</dbReference>
<dbReference type="GO" id="GO:0003735">
    <property type="term" value="F:structural constituent of ribosome"/>
    <property type="evidence" value="ECO:0007669"/>
    <property type="project" value="InterPro"/>
</dbReference>
<dbReference type="GO" id="GO:0006412">
    <property type="term" value="P:translation"/>
    <property type="evidence" value="ECO:0007669"/>
    <property type="project" value="UniProtKB-UniRule"/>
</dbReference>
<dbReference type="Gene3D" id="3.10.430.100">
    <property type="entry name" value="Ribosomal protein L9, C-terminal domain"/>
    <property type="match status" value="1"/>
</dbReference>
<dbReference type="Gene3D" id="3.40.5.10">
    <property type="entry name" value="Ribosomal protein L9, N-terminal domain"/>
    <property type="match status" value="1"/>
</dbReference>
<dbReference type="HAMAP" id="MF_00503">
    <property type="entry name" value="Ribosomal_bL9"/>
    <property type="match status" value="1"/>
</dbReference>
<dbReference type="InterPro" id="IPR000244">
    <property type="entry name" value="Ribosomal_bL9"/>
</dbReference>
<dbReference type="InterPro" id="IPR009027">
    <property type="entry name" value="Ribosomal_bL9/RNase_H1_N"/>
</dbReference>
<dbReference type="InterPro" id="IPR020594">
    <property type="entry name" value="Ribosomal_bL9_bac/chp"/>
</dbReference>
<dbReference type="InterPro" id="IPR020069">
    <property type="entry name" value="Ribosomal_bL9_C"/>
</dbReference>
<dbReference type="InterPro" id="IPR036791">
    <property type="entry name" value="Ribosomal_bL9_C_sf"/>
</dbReference>
<dbReference type="InterPro" id="IPR020070">
    <property type="entry name" value="Ribosomal_bL9_N"/>
</dbReference>
<dbReference type="InterPro" id="IPR036935">
    <property type="entry name" value="Ribosomal_bL9_N_sf"/>
</dbReference>
<dbReference type="NCBIfam" id="TIGR00158">
    <property type="entry name" value="L9"/>
    <property type="match status" value="1"/>
</dbReference>
<dbReference type="PANTHER" id="PTHR21368">
    <property type="entry name" value="50S RIBOSOMAL PROTEIN L9"/>
    <property type="match status" value="1"/>
</dbReference>
<dbReference type="Pfam" id="PF03948">
    <property type="entry name" value="Ribosomal_L9_C"/>
    <property type="match status" value="1"/>
</dbReference>
<dbReference type="Pfam" id="PF01281">
    <property type="entry name" value="Ribosomal_L9_N"/>
    <property type="match status" value="1"/>
</dbReference>
<dbReference type="SUPFAM" id="SSF55658">
    <property type="entry name" value="L9 N-domain-like"/>
    <property type="match status" value="1"/>
</dbReference>
<dbReference type="SUPFAM" id="SSF55653">
    <property type="entry name" value="Ribosomal protein L9 C-domain"/>
    <property type="match status" value="1"/>
</dbReference>
<dbReference type="PROSITE" id="PS00651">
    <property type="entry name" value="RIBOSOMAL_L9"/>
    <property type="match status" value="1"/>
</dbReference>
<name>RL9_BRASB</name>
<evidence type="ECO:0000255" key="1">
    <source>
        <dbReference type="HAMAP-Rule" id="MF_00503"/>
    </source>
</evidence>
<evidence type="ECO:0000256" key="2">
    <source>
        <dbReference type="SAM" id="MobiDB-lite"/>
    </source>
</evidence>
<evidence type="ECO:0000305" key="3"/>